<reference key="1">
    <citation type="journal article" date="2004" name="Nucleic Acids Res.">
        <title>Whole genome comparisons of serotype 4b and 1/2a strains of the food-borne pathogen Listeria monocytogenes reveal new insights into the core genome components of this species.</title>
        <authorList>
            <person name="Nelson K.E."/>
            <person name="Fouts D.E."/>
            <person name="Mongodin E.F."/>
            <person name="Ravel J."/>
            <person name="DeBoy R.T."/>
            <person name="Kolonay J.F."/>
            <person name="Rasko D.A."/>
            <person name="Angiuoli S.V."/>
            <person name="Gill S.R."/>
            <person name="Paulsen I.T."/>
            <person name="Peterson J.D."/>
            <person name="White O."/>
            <person name="Nelson W.C."/>
            <person name="Nierman W.C."/>
            <person name="Beanan M.J."/>
            <person name="Brinkac L.M."/>
            <person name="Daugherty S.C."/>
            <person name="Dodson R.J."/>
            <person name="Durkin A.S."/>
            <person name="Madupu R."/>
            <person name="Haft D.H."/>
            <person name="Selengut J."/>
            <person name="Van Aken S.E."/>
            <person name="Khouri H.M."/>
            <person name="Fedorova N."/>
            <person name="Forberger H.A."/>
            <person name="Tran B."/>
            <person name="Kathariou S."/>
            <person name="Wonderling L.D."/>
            <person name="Uhlich G.A."/>
            <person name="Bayles D.O."/>
            <person name="Luchansky J.B."/>
            <person name="Fraser C.M."/>
        </authorList>
    </citation>
    <scope>NUCLEOTIDE SEQUENCE [LARGE SCALE GENOMIC DNA]</scope>
    <source>
        <strain>F2365</strain>
    </source>
</reference>
<organism>
    <name type="scientific">Listeria monocytogenes serotype 4b (strain F2365)</name>
    <dbReference type="NCBI Taxonomy" id="265669"/>
    <lineage>
        <taxon>Bacteria</taxon>
        <taxon>Bacillati</taxon>
        <taxon>Bacillota</taxon>
        <taxon>Bacilli</taxon>
        <taxon>Bacillales</taxon>
        <taxon>Listeriaceae</taxon>
        <taxon>Listeria</taxon>
    </lineage>
</organism>
<dbReference type="EC" id="3.1.1.96" evidence="1"/>
<dbReference type="EMBL" id="AE017262">
    <property type="protein sequence ID" value="AAT04316.1"/>
    <property type="molecule type" value="Genomic_DNA"/>
</dbReference>
<dbReference type="RefSeq" id="WP_003731162.1">
    <property type="nucleotide sequence ID" value="NC_002973.6"/>
</dbReference>
<dbReference type="SMR" id="Q71ZE8"/>
<dbReference type="KEGG" id="lmf:LMOf2365_1541"/>
<dbReference type="HOGENOM" id="CLU_076901_1_0_9"/>
<dbReference type="GO" id="GO:0005737">
    <property type="term" value="C:cytoplasm"/>
    <property type="evidence" value="ECO:0007669"/>
    <property type="project" value="UniProtKB-SubCell"/>
</dbReference>
<dbReference type="GO" id="GO:0051500">
    <property type="term" value="F:D-tyrosyl-tRNA(Tyr) deacylase activity"/>
    <property type="evidence" value="ECO:0007669"/>
    <property type="project" value="TreeGrafter"/>
</dbReference>
<dbReference type="GO" id="GO:0106026">
    <property type="term" value="F:Gly-tRNA(Ala) deacylase activity"/>
    <property type="evidence" value="ECO:0007669"/>
    <property type="project" value="UniProtKB-UniRule"/>
</dbReference>
<dbReference type="GO" id="GO:0043908">
    <property type="term" value="F:Ser(Gly)-tRNA(Ala) hydrolase activity"/>
    <property type="evidence" value="ECO:0007669"/>
    <property type="project" value="UniProtKB-UniRule"/>
</dbReference>
<dbReference type="GO" id="GO:0000049">
    <property type="term" value="F:tRNA binding"/>
    <property type="evidence" value="ECO:0007669"/>
    <property type="project" value="UniProtKB-UniRule"/>
</dbReference>
<dbReference type="GO" id="GO:0019478">
    <property type="term" value="P:D-amino acid catabolic process"/>
    <property type="evidence" value="ECO:0007669"/>
    <property type="project" value="UniProtKB-UniRule"/>
</dbReference>
<dbReference type="CDD" id="cd00563">
    <property type="entry name" value="Dtyr_deacylase"/>
    <property type="match status" value="1"/>
</dbReference>
<dbReference type="FunFam" id="3.50.80.10:FF:000007">
    <property type="entry name" value="D-aminoacyl-tRNA deacylase"/>
    <property type="match status" value="1"/>
</dbReference>
<dbReference type="Gene3D" id="3.50.80.10">
    <property type="entry name" value="D-tyrosyl-tRNA(Tyr) deacylase"/>
    <property type="match status" value="1"/>
</dbReference>
<dbReference type="HAMAP" id="MF_00518">
    <property type="entry name" value="Deacylase_Dtd"/>
    <property type="match status" value="1"/>
</dbReference>
<dbReference type="InterPro" id="IPR003732">
    <property type="entry name" value="Daa-tRNA_deacyls_DTD"/>
</dbReference>
<dbReference type="InterPro" id="IPR023509">
    <property type="entry name" value="DTD-like_sf"/>
</dbReference>
<dbReference type="NCBIfam" id="TIGR00256">
    <property type="entry name" value="D-aminoacyl-tRNA deacylase"/>
    <property type="match status" value="1"/>
</dbReference>
<dbReference type="PANTHER" id="PTHR10472:SF5">
    <property type="entry name" value="D-AMINOACYL-TRNA DEACYLASE 1"/>
    <property type="match status" value="1"/>
</dbReference>
<dbReference type="PANTHER" id="PTHR10472">
    <property type="entry name" value="D-TYROSYL-TRNA TYR DEACYLASE"/>
    <property type="match status" value="1"/>
</dbReference>
<dbReference type="Pfam" id="PF02580">
    <property type="entry name" value="Tyr_Deacylase"/>
    <property type="match status" value="1"/>
</dbReference>
<dbReference type="SUPFAM" id="SSF69500">
    <property type="entry name" value="DTD-like"/>
    <property type="match status" value="1"/>
</dbReference>
<sequence length="150" mass="16602">MRVLLQRCYEASVSVEEEVISEIAGGLCLLVGFTHKDTPETVDYMAKKIVGLRIFEDESEKMNISLAERGGAILSVSQFTLYADVSRGKRPSFTKSAPAEKAETLYDLFNQKLTEAGFIVETGVFGAMMDVKIVNHGPVTIMLDSDEMRK</sequence>
<evidence type="ECO:0000255" key="1">
    <source>
        <dbReference type="HAMAP-Rule" id="MF_00518"/>
    </source>
</evidence>
<gene>
    <name evidence="1" type="primary">dtd</name>
    <name type="ordered locus">LMOf2365_1541</name>
</gene>
<proteinExistence type="inferred from homology"/>
<accession>Q71ZE8</accession>
<keyword id="KW-0963">Cytoplasm</keyword>
<keyword id="KW-0378">Hydrolase</keyword>
<keyword id="KW-0694">RNA-binding</keyword>
<keyword id="KW-0820">tRNA-binding</keyword>
<feature type="chain" id="PRO_0000164556" description="D-aminoacyl-tRNA deacylase">
    <location>
        <begin position="1"/>
        <end position="150"/>
    </location>
</feature>
<feature type="short sequence motif" description="Gly-cisPro motif, important for rejection of L-amino acids" evidence="1">
    <location>
        <begin position="137"/>
        <end position="138"/>
    </location>
</feature>
<comment type="function">
    <text evidence="1">An aminoacyl-tRNA editing enzyme that deacylates mischarged D-aminoacyl-tRNAs. Also deacylates mischarged glycyl-tRNA(Ala), protecting cells against glycine mischarging by AlaRS. Acts via tRNA-based rather than protein-based catalysis; rejects L-amino acids rather than detecting D-amino acids in the active site. By recycling D-aminoacyl-tRNA to D-amino acids and free tRNA molecules, this enzyme counteracts the toxicity associated with the formation of D-aminoacyl-tRNA entities in vivo and helps enforce protein L-homochirality.</text>
</comment>
<comment type="catalytic activity">
    <reaction evidence="1">
        <text>glycyl-tRNA(Ala) + H2O = tRNA(Ala) + glycine + H(+)</text>
        <dbReference type="Rhea" id="RHEA:53744"/>
        <dbReference type="Rhea" id="RHEA-COMP:9657"/>
        <dbReference type="Rhea" id="RHEA-COMP:13640"/>
        <dbReference type="ChEBI" id="CHEBI:15377"/>
        <dbReference type="ChEBI" id="CHEBI:15378"/>
        <dbReference type="ChEBI" id="CHEBI:57305"/>
        <dbReference type="ChEBI" id="CHEBI:78442"/>
        <dbReference type="ChEBI" id="CHEBI:78522"/>
        <dbReference type="EC" id="3.1.1.96"/>
    </reaction>
</comment>
<comment type="catalytic activity">
    <reaction evidence="1">
        <text>a D-aminoacyl-tRNA + H2O = a tRNA + a D-alpha-amino acid + H(+)</text>
        <dbReference type="Rhea" id="RHEA:13953"/>
        <dbReference type="Rhea" id="RHEA-COMP:10123"/>
        <dbReference type="Rhea" id="RHEA-COMP:10124"/>
        <dbReference type="ChEBI" id="CHEBI:15377"/>
        <dbReference type="ChEBI" id="CHEBI:15378"/>
        <dbReference type="ChEBI" id="CHEBI:59871"/>
        <dbReference type="ChEBI" id="CHEBI:78442"/>
        <dbReference type="ChEBI" id="CHEBI:79333"/>
        <dbReference type="EC" id="3.1.1.96"/>
    </reaction>
</comment>
<comment type="subunit">
    <text evidence="1">Homodimer.</text>
</comment>
<comment type="subcellular location">
    <subcellularLocation>
        <location evidence="1">Cytoplasm</location>
    </subcellularLocation>
</comment>
<comment type="domain">
    <text evidence="1">A Gly-cisPro motif from one monomer fits into the active site of the other monomer to allow specific chiral rejection of L-amino acids.</text>
</comment>
<comment type="similarity">
    <text evidence="1">Belongs to the DTD family.</text>
</comment>
<name>DTD_LISMF</name>
<protein>
    <recommendedName>
        <fullName evidence="1">D-aminoacyl-tRNA deacylase</fullName>
        <shortName evidence="1">DTD</shortName>
        <ecNumber evidence="1">3.1.1.96</ecNumber>
    </recommendedName>
    <alternativeName>
        <fullName evidence="1">Gly-tRNA(Ala) deacylase</fullName>
    </alternativeName>
</protein>